<accession>P10337</accession>
<keyword id="KW-0046">Antibiotic resistance</keyword>
<keyword id="KW-0489">Methyltransferase</keyword>
<keyword id="KW-0614">Plasmid</keyword>
<keyword id="KW-0694">RNA-binding</keyword>
<keyword id="KW-0949">S-adenosyl-L-methionine</keyword>
<keyword id="KW-0808">Transferase</keyword>
<keyword id="KW-0814">Transposable element</keyword>
<comment type="function">
    <text>Involved in erythromycin resistance.</text>
</comment>
<comment type="similarity">
    <text evidence="1">Belongs to the class I-like SAM-binding methyltransferase superfamily. rRNA adenine N(6)-methyltransferase family.</text>
</comment>
<sequence length="266" mass="30357">MTKKKLPVRFTGQHFTIDKVLIKDAIRQANISNQDTVLDIGAGKGFLTVHLLKIANNVVAIENDTALVEHLRKLFSDARNVQVVGCDFRNFAVPKFPFKVVSNIPYGITSDIFKILMFESLGNFLGGSIVLQLEPTQKLFSRKLYNPYTVFYHTFFDLKLVYEVGPESFLPPPTVKSALLNIKRKHLFFDFKFKAKYLAFISYLLEKPDLSVKTALKSIFRKSQVRSISEKFGLNLNAQIVCLSPSQWLNCFLEMLEVVPEKFHPS</sequence>
<protein>
    <recommendedName>
        <fullName>rRNA adenine N-6-methyltransferase</fullName>
        <ecNumber evidence="1">2.1.1.-</ecNumber>
    </recommendedName>
    <alternativeName>
        <fullName>Erythromycin resistance protein</fullName>
    </alternativeName>
    <alternativeName>
        <fullName>Macrolide-lincosamide-streptogramin B resistance protein</fullName>
    </alternativeName>
</protein>
<evidence type="ECO:0000255" key="1">
    <source>
        <dbReference type="PROSITE-ProRule" id="PRU01026"/>
    </source>
</evidence>
<dbReference type="EC" id="2.1.1.-" evidence="1"/>
<dbReference type="EMBL" id="M14730">
    <property type="protein sequence ID" value="AAA98217.1"/>
    <property type="molecule type" value="Genomic_DNA"/>
</dbReference>
<dbReference type="EMBL" id="M17124">
    <property type="protein sequence ID" value="AAA88675.1"/>
    <property type="molecule type" value="Genomic_DNA"/>
</dbReference>
<dbReference type="PIR" id="A25157">
    <property type="entry name" value="S55397"/>
</dbReference>
<dbReference type="RefSeq" id="WP_032488512.1">
    <property type="nucleotide sequence ID" value="NG_047824.1"/>
</dbReference>
<dbReference type="SMR" id="P10337"/>
<dbReference type="CARD" id="ARO:3000498">
    <property type="molecule name" value="ErmF"/>
    <property type="mechanism identifier" value="ARO:0001001"/>
    <property type="mechanism name" value="antibiotic target alteration"/>
</dbReference>
<dbReference type="KEGG" id="ag:AAA98217"/>
<dbReference type="GO" id="GO:0003723">
    <property type="term" value="F:RNA binding"/>
    <property type="evidence" value="ECO:0007669"/>
    <property type="project" value="UniProtKB-KW"/>
</dbReference>
<dbReference type="GO" id="GO:0000179">
    <property type="term" value="F:rRNA (adenine-N6,N6-)-dimethyltransferase activity"/>
    <property type="evidence" value="ECO:0007669"/>
    <property type="project" value="InterPro"/>
</dbReference>
<dbReference type="GO" id="GO:0046677">
    <property type="term" value="P:response to antibiotic"/>
    <property type="evidence" value="ECO:0007669"/>
    <property type="project" value="UniProtKB-KW"/>
</dbReference>
<dbReference type="CDD" id="cd02440">
    <property type="entry name" value="AdoMet_MTases"/>
    <property type="match status" value="1"/>
</dbReference>
<dbReference type="Gene3D" id="1.10.8.100">
    <property type="entry name" value="Ribosomal RNA adenine dimethylase-like, domain 2"/>
    <property type="match status" value="1"/>
</dbReference>
<dbReference type="Gene3D" id="3.40.50.150">
    <property type="entry name" value="Vaccinia Virus protein VP39"/>
    <property type="match status" value="1"/>
</dbReference>
<dbReference type="InterPro" id="IPR001737">
    <property type="entry name" value="KsgA/Erm"/>
</dbReference>
<dbReference type="InterPro" id="IPR023165">
    <property type="entry name" value="rRNA_Ade_diMease-like_C"/>
</dbReference>
<dbReference type="InterPro" id="IPR020596">
    <property type="entry name" value="rRNA_Ade_Mease_Trfase_CS"/>
</dbReference>
<dbReference type="InterPro" id="IPR020598">
    <property type="entry name" value="rRNA_Ade_methylase_Trfase_N"/>
</dbReference>
<dbReference type="InterPro" id="IPR029063">
    <property type="entry name" value="SAM-dependent_MTases_sf"/>
</dbReference>
<dbReference type="NCBIfam" id="NF000499">
    <property type="entry name" value="Erm23S_rRNA_broad"/>
    <property type="match status" value="1"/>
</dbReference>
<dbReference type="NCBIfam" id="NF012223">
    <property type="entry name" value="erm_F_23S_MT"/>
    <property type="match status" value="1"/>
</dbReference>
<dbReference type="PANTHER" id="PTHR11727">
    <property type="entry name" value="DIMETHYLADENOSINE TRANSFERASE"/>
    <property type="match status" value="1"/>
</dbReference>
<dbReference type="PANTHER" id="PTHR11727:SF7">
    <property type="entry name" value="DIMETHYLADENOSINE TRANSFERASE-RELATED"/>
    <property type="match status" value="1"/>
</dbReference>
<dbReference type="Pfam" id="PF00398">
    <property type="entry name" value="RrnaAD"/>
    <property type="match status" value="1"/>
</dbReference>
<dbReference type="SMART" id="SM00650">
    <property type="entry name" value="rADc"/>
    <property type="match status" value="1"/>
</dbReference>
<dbReference type="SUPFAM" id="SSF53335">
    <property type="entry name" value="S-adenosyl-L-methionine-dependent methyltransferases"/>
    <property type="match status" value="1"/>
</dbReference>
<dbReference type="PROSITE" id="PS01131">
    <property type="entry name" value="RRNA_A_DIMETH"/>
    <property type="match status" value="1"/>
</dbReference>
<dbReference type="PROSITE" id="PS51689">
    <property type="entry name" value="SAM_RNA_A_N6_MT"/>
    <property type="match status" value="1"/>
</dbReference>
<name>ERMF_BACFG</name>
<feature type="chain" id="PRO_0000101671" description="rRNA adenine N-6-methyltransferase">
    <location>
        <begin position="1"/>
        <end position="266"/>
    </location>
</feature>
<feature type="binding site" evidence="1">
    <location>
        <position position="14"/>
    </location>
    <ligand>
        <name>S-adenosyl-L-methionine</name>
        <dbReference type="ChEBI" id="CHEBI:59789"/>
    </ligand>
</feature>
<feature type="binding site" evidence="1">
    <location>
        <position position="16"/>
    </location>
    <ligand>
        <name>S-adenosyl-L-methionine</name>
        <dbReference type="ChEBI" id="CHEBI:59789"/>
    </ligand>
</feature>
<feature type="binding site" evidence="1">
    <location>
        <position position="41"/>
    </location>
    <ligand>
        <name>S-adenosyl-L-methionine</name>
        <dbReference type="ChEBI" id="CHEBI:59789"/>
    </ligand>
</feature>
<feature type="binding site" evidence="1">
    <location>
        <position position="62"/>
    </location>
    <ligand>
        <name>S-adenosyl-L-methionine</name>
        <dbReference type="ChEBI" id="CHEBI:59789"/>
    </ligand>
</feature>
<feature type="binding site" evidence="1">
    <location>
        <position position="87"/>
    </location>
    <ligand>
        <name>S-adenosyl-L-methionine</name>
        <dbReference type="ChEBI" id="CHEBI:59789"/>
    </ligand>
</feature>
<feature type="binding site" evidence="1">
    <location>
        <position position="103"/>
    </location>
    <ligand>
        <name>S-adenosyl-L-methionine</name>
        <dbReference type="ChEBI" id="CHEBI:59789"/>
    </ligand>
</feature>
<reference key="1">
    <citation type="journal article" date="1986" name="J. Bacteriol.">
        <title>Complete nucleotide sequence and transcription of ermF, a macrolide-lincosamide-streptogramin B resistance determinant from Bacteroides fragilis.</title>
        <authorList>
            <person name="Rasmussen J.L."/>
            <person name="Odelson D.A."/>
            <person name="Macrina F.L."/>
        </authorList>
    </citation>
    <scope>NUCLEOTIDE SEQUENCE [GENOMIC DNA]</scope>
    <source>
        <transposon>Tn4351</transposon>
    </source>
</reference>
<reference key="2">
    <citation type="journal article" date="1987" name="J. Bacteriol.">
        <title>Complete nucleotide sequence of insertion element IS4351 from Bacteroides fragilis.</title>
        <authorList>
            <person name="Rasmussen J.L."/>
            <person name="Odelson D.A."/>
            <person name="Macrina F.L."/>
        </authorList>
    </citation>
    <scope>NUCLEOTIDE SEQUENCE [GENOMIC DNA]</scope>
    <source>
        <transposon>Tn4351</transposon>
    </source>
</reference>
<organism>
    <name type="scientific">Bacteroides fragilis</name>
    <dbReference type="NCBI Taxonomy" id="817"/>
    <lineage>
        <taxon>Bacteria</taxon>
        <taxon>Pseudomonadati</taxon>
        <taxon>Bacteroidota</taxon>
        <taxon>Bacteroidia</taxon>
        <taxon>Bacteroidales</taxon>
        <taxon>Bacteroidaceae</taxon>
        <taxon>Bacteroides</taxon>
    </lineage>
</organism>
<proteinExistence type="inferred from homology"/>
<geneLocation type="plasmid">
    <name>pBF4</name>
</geneLocation>
<gene>
    <name type="primary">ermF</name>
</gene>